<proteinExistence type="evidence at transcript level"/>
<organism>
    <name type="scientific">Arabidopsis thaliana</name>
    <name type="common">Mouse-ear cress</name>
    <dbReference type="NCBI Taxonomy" id="3702"/>
    <lineage>
        <taxon>Eukaryota</taxon>
        <taxon>Viridiplantae</taxon>
        <taxon>Streptophyta</taxon>
        <taxon>Embryophyta</taxon>
        <taxon>Tracheophyta</taxon>
        <taxon>Spermatophyta</taxon>
        <taxon>Magnoliopsida</taxon>
        <taxon>eudicotyledons</taxon>
        <taxon>Gunneridae</taxon>
        <taxon>Pentapetalae</taxon>
        <taxon>rosids</taxon>
        <taxon>malvids</taxon>
        <taxon>Brassicales</taxon>
        <taxon>Brassicaceae</taxon>
        <taxon>Camelineae</taxon>
        <taxon>Arabidopsis</taxon>
    </lineage>
</organism>
<accession>Q0WVW7</accession>
<accession>Q8W028</accession>
<accession>Q9C6N0</accession>
<protein>
    <recommendedName>
        <fullName>ATP-dependent DNA helicase Q-like 5</fullName>
        <ecNumber evidence="2">5.6.2.4</ecNumber>
    </recommendedName>
    <alternativeName>
        <fullName evidence="7">DNA 3'-5' helicase RecQ5</fullName>
    </alternativeName>
    <alternativeName>
        <fullName>RecQ-like protein 5</fullName>
        <shortName>AtRecQ5</shortName>
        <shortName>AtRecQl5</shortName>
    </alternativeName>
</protein>
<feature type="chain" id="PRO_0000394531" description="ATP-dependent DNA helicase Q-like 5">
    <location>
        <begin position="1"/>
        <end position="911"/>
    </location>
</feature>
<feature type="domain" description="Helicase ATP-binding" evidence="3">
    <location>
        <begin position="278"/>
        <end position="448"/>
    </location>
</feature>
<feature type="domain" description="Helicase C-terminal" evidence="4">
    <location>
        <begin position="470"/>
        <end position="628"/>
    </location>
</feature>
<feature type="region of interest" description="Disordered" evidence="5">
    <location>
        <begin position="1"/>
        <end position="84"/>
    </location>
</feature>
<feature type="short sequence motif" description="DEAH box">
    <location>
        <begin position="390"/>
        <end position="393"/>
    </location>
</feature>
<feature type="compositionally biased region" description="Low complexity" evidence="5">
    <location>
        <begin position="20"/>
        <end position="48"/>
    </location>
</feature>
<feature type="compositionally biased region" description="Pro residues" evidence="5">
    <location>
        <begin position="54"/>
        <end position="79"/>
    </location>
</feature>
<feature type="binding site" evidence="3">
    <location>
        <begin position="291"/>
        <end position="298"/>
    </location>
    <ligand>
        <name>ATP</name>
        <dbReference type="ChEBI" id="CHEBI:30616"/>
    </ligand>
</feature>
<feature type="sequence conflict" description="In Ref. 1; CAD13472." evidence="7" ref="1">
    <original>A</original>
    <variation>E</variation>
    <location>
        <position position="14"/>
    </location>
</feature>
<feature type="sequence conflict" description="In Ref. 4; BAE98731." evidence="7" ref="4">
    <original>S</original>
    <variation>L</variation>
    <location>
        <position position="531"/>
    </location>
</feature>
<dbReference type="EC" id="5.6.2.4" evidence="2"/>
<dbReference type="EMBL" id="AJ421618">
    <property type="protein sequence ID" value="CAD13472.1"/>
    <property type="status" value="ALT_INIT"/>
    <property type="molecule type" value="mRNA"/>
</dbReference>
<dbReference type="EMBL" id="AC079280">
    <property type="protein sequence ID" value="AAG50580.1"/>
    <property type="status" value="ALT_SEQ"/>
    <property type="molecule type" value="Genomic_DNA"/>
</dbReference>
<dbReference type="EMBL" id="CP002684">
    <property type="protein sequence ID" value="AEE30887.1"/>
    <property type="molecule type" value="Genomic_DNA"/>
</dbReference>
<dbReference type="EMBL" id="AK226619">
    <property type="protein sequence ID" value="BAE98731.1"/>
    <property type="molecule type" value="mRNA"/>
</dbReference>
<dbReference type="RefSeq" id="NP_174109.2">
    <property type="nucleotide sequence ID" value="NM_102553.5"/>
</dbReference>
<dbReference type="SMR" id="Q0WVW7"/>
<dbReference type="FunCoup" id="Q0WVW7">
    <property type="interactions" value="1318"/>
</dbReference>
<dbReference type="STRING" id="3702.Q0WVW7"/>
<dbReference type="iPTMnet" id="Q0WVW7"/>
<dbReference type="PaxDb" id="3702-AT1G27880.1"/>
<dbReference type="ProteomicsDB" id="226543"/>
<dbReference type="EnsemblPlants" id="AT1G27880.1">
    <property type="protein sequence ID" value="AT1G27880.1"/>
    <property type="gene ID" value="AT1G27880"/>
</dbReference>
<dbReference type="GeneID" id="839681"/>
<dbReference type="Gramene" id="AT1G27880.1">
    <property type="protein sequence ID" value="AT1G27880.1"/>
    <property type="gene ID" value="AT1G27880"/>
</dbReference>
<dbReference type="KEGG" id="ath:AT1G27880"/>
<dbReference type="Araport" id="AT1G27880"/>
<dbReference type="TAIR" id="AT1G27880"/>
<dbReference type="eggNOG" id="KOG0351">
    <property type="taxonomic scope" value="Eukaryota"/>
</dbReference>
<dbReference type="HOGENOM" id="CLU_001103_10_2_1"/>
<dbReference type="InParanoid" id="Q0WVW7"/>
<dbReference type="OMA" id="AYCYTIV"/>
<dbReference type="PhylomeDB" id="Q0WVW7"/>
<dbReference type="PRO" id="PR:Q0WVW7"/>
<dbReference type="Proteomes" id="UP000006548">
    <property type="component" value="Chromosome 1"/>
</dbReference>
<dbReference type="ExpressionAtlas" id="Q0WVW7">
    <property type="expression patterns" value="baseline and differential"/>
</dbReference>
<dbReference type="GO" id="GO:0005634">
    <property type="term" value="C:nucleus"/>
    <property type="evidence" value="ECO:0007669"/>
    <property type="project" value="UniProtKB-SubCell"/>
</dbReference>
<dbReference type="GO" id="GO:0005524">
    <property type="term" value="F:ATP binding"/>
    <property type="evidence" value="ECO:0007669"/>
    <property type="project" value="UniProtKB-KW"/>
</dbReference>
<dbReference type="GO" id="GO:0016887">
    <property type="term" value="F:ATP hydrolysis activity"/>
    <property type="evidence" value="ECO:0007669"/>
    <property type="project" value="RHEA"/>
</dbReference>
<dbReference type="GO" id="GO:0003677">
    <property type="term" value="F:DNA binding"/>
    <property type="evidence" value="ECO:0007669"/>
    <property type="project" value="UniProtKB-KW"/>
</dbReference>
<dbReference type="GO" id="GO:0004386">
    <property type="term" value="F:helicase activity"/>
    <property type="evidence" value="ECO:0007669"/>
    <property type="project" value="UniProtKB-KW"/>
</dbReference>
<dbReference type="GO" id="GO:0042631">
    <property type="term" value="P:cellular response to water deprivation"/>
    <property type="evidence" value="ECO:0000270"/>
    <property type="project" value="UniProtKB"/>
</dbReference>
<dbReference type="GO" id="GO:0006310">
    <property type="term" value="P:DNA recombination"/>
    <property type="evidence" value="ECO:0007669"/>
    <property type="project" value="InterPro"/>
</dbReference>
<dbReference type="CDD" id="cd18018">
    <property type="entry name" value="DEXHc_RecQ4-like"/>
    <property type="match status" value="1"/>
</dbReference>
<dbReference type="CDD" id="cd18794">
    <property type="entry name" value="SF2_C_RecQ"/>
    <property type="match status" value="1"/>
</dbReference>
<dbReference type="FunFam" id="3.40.50.300:FF:001334">
    <property type="entry name" value="ATP-dependent DNA helicase Q-like 5"/>
    <property type="match status" value="1"/>
</dbReference>
<dbReference type="FunFam" id="3.40.50.300:FF:000772">
    <property type="entry name" value="ATP-dependent DNA helicase Q4"/>
    <property type="match status" value="1"/>
</dbReference>
<dbReference type="Gene3D" id="3.40.50.300">
    <property type="entry name" value="P-loop containing nucleotide triphosphate hydrolases"/>
    <property type="match status" value="2"/>
</dbReference>
<dbReference type="InterPro" id="IPR011545">
    <property type="entry name" value="DEAD/DEAH_box_helicase_dom"/>
</dbReference>
<dbReference type="InterPro" id="IPR002464">
    <property type="entry name" value="DNA/RNA_helicase_DEAH_CS"/>
</dbReference>
<dbReference type="InterPro" id="IPR004589">
    <property type="entry name" value="DNA_helicase_ATP-dep_RecQ"/>
</dbReference>
<dbReference type="InterPro" id="IPR014001">
    <property type="entry name" value="Helicase_ATP-bd"/>
</dbReference>
<dbReference type="InterPro" id="IPR001650">
    <property type="entry name" value="Helicase_C-like"/>
</dbReference>
<dbReference type="InterPro" id="IPR027417">
    <property type="entry name" value="P-loop_NTPase"/>
</dbReference>
<dbReference type="NCBIfam" id="TIGR00614">
    <property type="entry name" value="recQ_fam"/>
    <property type="match status" value="1"/>
</dbReference>
<dbReference type="PANTHER" id="PTHR13710:SF108">
    <property type="entry name" value="ATP-DEPENDENT DNA HELICASE Q4"/>
    <property type="match status" value="1"/>
</dbReference>
<dbReference type="PANTHER" id="PTHR13710">
    <property type="entry name" value="DNA HELICASE RECQ FAMILY MEMBER"/>
    <property type="match status" value="1"/>
</dbReference>
<dbReference type="Pfam" id="PF00270">
    <property type="entry name" value="DEAD"/>
    <property type="match status" value="1"/>
</dbReference>
<dbReference type="Pfam" id="PF00271">
    <property type="entry name" value="Helicase_C"/>
    <property type="match status" value="1"/>
</dbReference>
<dbReference type="SMART" id="SM00487">
    <property type="entry name" value="DEXDc"/>
    <property type="match status" value="1"/>
</dbReference>
<dbReference type="SMART" id="SM00490">
    <property type="entry name" value="HELICc"/>
    <property type="match status" value="1"/>
</dbReference>
<dbReference type="SUPFAM" id="SSF52540">
    <property type="entry name" value="P-loop containing nucleoside triphosphate hydrolases"/>
    <property type="match status" value="1"/>
</dbReference>
<dbReference type="PROSITE" id="PS00690">
    <property type="entry name" value="DEAH_ATP_HELICASE"/>
    <property type="match status" value="1"/>
</dbReference>
<dbReference type="PROSITE" id="PS51192">
    <property type="entry name" value="HELICASE_ATP_BIND_1"/>
    <property type="match status" value="1"/>
</dbReference>
<dbReference type="PROSITE" id="PS51194">
    <property type="entry name" value="HELICASE_CTER"/>
    <property type="match status" value="1"/>
</dbReference>
<name>RQL5_ARATH</name>
<evidence type="ECO:0000250" key="1"/>
<evidence type="ECO:0000250" key="2">
    <source>
        <dbReference type="UniProtKB" id="Q9FT73"/>
    </source>
</evidence>
<evidence type="ECO:0000255" key="3">
    <source>
        <dbReference type="PROSITE-ProRule" id="PRU00541"/>
    </source>
</evidence>
<evidence type="ECO:0000255" key="4">
    <source>
        <dbReference type="PROSITE-ProRule" id="PRU00542"/>
    </source>
</evidence>
<evidence type="ECO:0000256" key="5">
    <source>
        <dbReference type="SAM" id="MobiDB-lite"/>
    </source>
</evidence>
<evidence type="ECO:0000269" key="6">
    <source>
    </source>
</evidence>
<evidence type="ECO:0000305" key="7"/>
<comment type="function">
    <text evidence="2">3'-5' DNA helicase that may play a role in the repair of DNA.</text>
</comment>
<comment type="catalytic activity">
    <reaction evidence="2">
        <text>Couples ATP hydrolysis with the unwinding of duplex DNA by translocating in the 3'-5' direction.</text>
        <dbReference type="EC" id="5.6.2.4"/>
    </reaction>
</comment>
<comment type="catalytic activity">
    <reaction evidence="2">
        <text>ATP + H2O = ADP + phosphate + H(+)</text>
        <dbReference type="Rhea" id="RHEA:13065"/>
        <dbReference type="ChEBI" id="CHEBI:15377"/>
        <dbReference type="ChEBI" id="CHEBI:15378"/>
        <dbReference type="ChEBI" id="CHEBI:30616"/>
        <dbReference type="ChEBI" id="CHEBI:43474"/>
        <dbReference type="ChEBI" id="CHEBI:456216"/>
    </reaction>
</comment>
<comment type="subcellular location">
    <subcellularLocation>
        <location evidence="1">Nucleus</location>
    </subcellularLocation>
</comment>
<comment type="tissue specificity">
    <text evidence="6">Mostly expressed in roots, seedlings, shoots, shoot apical mersitem, flowers, and siliques.</text>
</comment>
<comment type="induction">
    <text evidence="6">Repressed by drought.</text>
</comment>
<comment type="similarity">
    <text evidence="7">Belongs to the helicase family. RecQ subfamily.</text>
</comment>
<comment type="sequence caution" evidence="7">
    <conflict type="erroneous gene model prediction">
        <sequence resource="EMBL-CDS" id="AAG50580"/>
    </conflict>
</comment>
<comment type="sequence caution" evidence="7">
    <conflict type="erroneous initiation">
        <sequence resource="EMBL-CDS" id="CAD13472"/>
    </conflict>
    <text>Truncated N-terminus.</text>
</comment>
<sequence>MDFDSDSDGSHVSATPPRDSFPSSPPQLQSPAKHVPPVSRKMTSSSSRSKPKAPTHPPPNPSQEAPVPSPYPPPPPPSPLFTNLPFRICQSQPARFSSSVSSFSRLCSRASFTSVEKLKSDGVDFVPEPPLVEVIAPPKSVRRKPPNLITDTITSPPVKPMVFRSNGNGEGNFVKLNLNGKRGKKFPSKYKGVSKSRSSYSFRGKRYKKKEADGDGESLLEEESDLQKQIEDEANGFISSVEDAILAVKTEASDENLTKLLNLVYGYDSFRDGQLQAIKMILGGSSTMLVLPTGAGKSLCYQIPAMILPGITLVVSPLVSLMIDQLKHLPSIIKGGLLSSSQRPEEATETLRKLKEGIIKVLFVSPERLLNVEFLSMFRMSLSVSLVVVDEAHCVSEWSHNFRPSYMRLKASMLFSELKAECILAMTATATTMTLQAVMSSLEIPSTNLIQKSQLRDNFELSVSLSGANRMKDLLILMESPPYKEIRSIIVYCKFQYETDMISKYLRDNNINAKGYHSGLPAKDRVRIQESFCSNKIRVVVATVAFGMGLDKGDVGAVIHFSVPGSMEEYVQEIGRAGRDGRLSYCHLFYDNDTYLKLRSLAHSDGVDEYAVGKFLTHVFSTETKQHEKICSLVIESASQKFDMKEEVMQTILTHLELGEVQYLRMLPQLNICCTLNFHKSSPNTLAARSAIVAAILKKSHVKQGLHVFDIPAVASSICVATTDVLAEIQALKMKGEVTYELKDSAFCYTILKSPKEICSLSSHLTKWLTEIESCKVRKLDIMSSAAVAAISVSNTSELSSGAKQTRSLQSRIFDYFNGDEKCDSPSKATQNCAFLRADIKVFLQSNRQAKFTPRAIARIMHGVGSPAFPNSVWSKTHFWGRYMNVDFRVIMEAAQTELFNFVDRNAALAT</sequence>
<reference key="1">
    <citation type="journal article" date="2000" name="Nucleic Acids Res.">
        <title>Molecular characterisation of RecQ homologues in Arabidopsis thaliana.</title>
        <authorList>
            <person name="Hartung F."/>
            <person name="Plchova H."/>
            <person name="Puchta H."/>
        </authorList>
    </citation>
    <scope>NUCLEOTIDE SEQUENCE [MRNA]</scope>
    <source>
        <strain>cv. Columbia</strain>
    </source>
</reference>
<reference key="2">
    <citation type="journal article" date="2000" name="Nature">
        <title>Sequence and analysis of chromosome 1 of the plant Arabidopsis thaliana.</title>
        <authorList>
            <person name="Theologis A."/>
            <person name="Ecker J.R."/>
            <person name="Palm C.J."/>
            <person name="Federspiel N.A."/>
            <person name="Kaul S."/>
            <person name="White O."/>
            <person name="Alonso J."/>
            <person name="Altafi H."/>
            <person name="Araujo R."/>
            <person name="Bowman C.L."/>
            <person name="Brooks S.Y."/>
            <person name="Buehler E."/>
            <person name="Chan A."/>
            <person name="Chao Q."/>
            <person name="Chen H."/>
            <person name="Cheuk R.F."/>
            <person name="Chin C.W."/>
            <person name="Chung M.K."/>
            <person name="Conn L."/>
            <person name="Conway A.B."/>
            <person name="Conway A.R."/>
            <person name="Creasy T.H."/>
            <person name="Dewar K."/>
            <person name="Dunn P."/>
            <person name="Etgu P."/>
            <person name="Feldblyum T.V."/>
            <person name="Feng J.-D."/>
            <person name="Fong B."/>
            <person name="Fujii C.Y."/>
            <person name="Gill J.E."/>
            <person name="Goldsmith A.D."/>
            <person name="Haas B."/>
            <person name="Hansen N.F."/>
            <person name="Hughes B."/>
            <person name="Huizar L."/>
            <person name="Hunter J.L."/>
            <person name="Jenkins J."/>
            <person name="Johnson-Hopson C."/>
            <person name="Khan S."/>
            <person name="Khaykin E."/>
            <person name="Kim C.J."/>
            <person name="Koo H.L."/>
            <person name="Kremenetskaia I."/>
            <person name="Kurtz D.B."/>
            <person name="Kwan A."/>
            <person name="Lam B."/>
            <person name="Langin-Hooper S."/>
            <person name="Lee A."/>
            <person name="Lee J.M."/>
            <person name="Lenz C.A."/>
            <person name="Li J.H."/>
            <person name="Li Y.-P."/>
            <person name="Lin X."/>
            <person name="Liu S.X."/>
            <person name="Liu Z.A."/>
            <person name="Luros J.S."/>
            <person name="Maiti R."/>
            <person name="Marziali A."/>
            <person name="Militscher J."/>
            <person name="Miranda M."/>
            <person name="Nguyen M."/>
            <person name="Nierman W.C."/>
            <person name="Osborne B.I."/>
            <person name="Pai G."/>
            <person name="Peterson J."/>
            <person name="Pham P.K."/>
            <person name="Rizzo M."/>
            <person name="Rooney T."/>
            <person name="Rowley D."/>
            <person name="Sakano H."/>
            <person name="Salzberg S.L."/>
            <person name="Schwartz J.R."/>
            <person name="Shinn P."/>
            <person name="Southwick A.M."/>
            <person name="Sun H."/>
            <person name="Tallon L.J."/>
            <person name="Tambunga G."/>
            <person name="Toriumi M.J."/>
            <person name="Town C.D."/>
            <person name="Utterback T."/>
            <person name="Van Aken S."/>
            <person name="Vaysberg M."/>
            <person name="Vysotskaia V.S."/>
            <person name="Walker M."/>
            <person name="Wu D."/>
            <person name="Yu G."/>
            <person name="Fraser C.M."/>
            <person name="Venter J.C."/>
            <person name="Davis R.W."/>
        </authorList>
    </citation>
    <scope>NUCLEOTIDE SEQUENCE [LARGE SCALE GENOMIC DNA]</scope>
    <source>
        <strain>cv. Columbia</strain>
    </source>
</reference>
<reference key="3">
    <citation type="journal article" date="2017" name="Plant J.">
        <title>Araport11: a complete reannotation of the Arabidopsis thaliana reference genome.</title>
        <authorList>
            <person name="Cheng C.Y."/>
            <person name="Krishnakumar V."/>
            <person name="Chan A.P."/>
            <person name="Thibaud-Nissen F."/>
            <person name="Schobel S."/>
            <person name="Town C.D."/>
        </authorList>
    </citation>
    <scope>GENOME REANNOTATION</scope>
    <source>
        <strain>cv. Columbia</strain>
    </source>
</reference>
<reference key="4">
    <citation type="submission" date="2006-07" db="EMBL/GenBank/DDBJ databases">
        <title>Large-scale analysis of RIKEN Arabidopsis full-length (RAFL) cDNAs.</title>
        <authorList>
            <person name="Totoki Y."/>
            <person name="Seki M."/>
            <person name="Ishida J."/>
            <person name="Nakajima M."/>
            <person name="Enju A."/>
            <person name="Kamiya A."/>
            <person name="Narusaka M."/>
            <person name="Shin-i T."/>
            <person name="Nakagawa M."/>
            <person name="Sakamoto N."/>
            <person name="Oishi K."/>
            <person name="Kohara Y."/>
            <person name="Kobayashi M."/>
            <person name="Toyoda A."/>
            <person name="Sakaki Y."/>
            <person name="Sakurai T."/>
            <person name="Iida K."/>
            <person name="Akiyama K."/>
            <person name="Satou M."/>
            <person name="Toyoda T."/>
            <person name="Konagaya A."/>
            <person name="Carninci P."/>
            <person name="Kawai J."/>
            <person name="Hayashizaki Y."/>
            <person name="Shinozaki K."/>
        </authorList>
    </citation>
    <scope>NUCLEOTIDE SEQUENCE [LARGE SCALE MRNA]</scope>
    <source>
        <strain>cv. Columbia</strain>
    </source>
</reference>
<reference key="5">
    <citation type="journal article" date="2003" name="Plant Mol. Biol.">
        <title>Arabidopsis RecQsim, a plant-specific member of the RecQ helicase family, can suppress the MMS hypersensitivity of the yeast sgs1 mutant.</title>
        <authorList>
            <person name="Bagherieh-Najjar M.B."/>
            <person name="de Vries O.M."/>
            <person name="Kroon J.T."/>
            <person name="Wright E.L."/>
            <person name="Elborough K.M."/>
            <person name="Hille J."/>
            <person name="Dijkwel P.P."/>
        </authorList>
    </citation>
    <scope>TISSUE SPECIFICITY</scope>
    <scope>INDUCTION BY ABIOTIC STRESSES</scope>
</reference>
<reference key="6">
    <citation type="journal article" date="2006" name="J. Plant Physiol.">
        <title>The RecQ gene family in plants.</title>
        <authorList>
            <person name="Hartung F."/>
            <person name="Puchta H."/>
        </authorList>
    </citation>
    <scope>GENE FAMILY</scope>
    <scope>NOMENCLATURE</scope>
</reference>
<reference key="7">
    <citation type="journal article" date="2013" name="PLoS ONE">
        <title>Genome-wide comparative in silico analysis of the RNA helicase gene family in Zea mays and Glycine max: a comparison with Arabidopsis and Oryza sativa.</title>
        <authorList>
            <person name="Xu R."/>
            <person name="Zhang S."/>
            <person name="Huang J."/>
            <person name="Zheng C."/>
        </authorList>
    </citation>
    <scope>GENE FAMILY</scope>
</reference>
<keyword id="KW-0067">ATP-binding</keyword>
<keyword id="KW-0238">DNA-binding</keyword>
<keyword id="KW-0347">Helicase</keyword>
<keyword id="KW-0378">Hydrolase</keyword>
<keyword id="KW-0413">Isomerase</keyword>
<keyword id="KW-0547">Nucleotide-binding</keyword>
<keyword id="KW-0539">Nucleus</keyword>
<keyword id="KW-1185">Reference proteome</keyword>
<gene>
    <name type="primary">RECQL5</name>
    <name type="synonym">RECQ5</name>
    <name type="synonym">RQL5</name>
    <name type="ordered locus">At1g27880</name>
    <name type="ORF">F28L5.4</name>
</gene>